<proteinExistence type="inferred from homology"/>
<feature type="chain" id="PRO_0000289551" description="Type IV secretion system protein virB1">
    <location>
        <begin position="1"/>
        <end position="238"/>
    </location>
</feature>
<feature type="region of interest" description="Disordered" evidence="1">
    <location>
        <begin position="197"/>
        <end position="238"/>
    </location>
</feature>
<feature type="compositionally biased region" description="Polar residues" evidence="1">
    <location>
        <begin position="198"/>
        <end position="209"/>
    </location>
</feature>
<dbReference type="EMBL" id="AF226278">
    <property type="protein sequence ID" value="AAF73894.1"/>
    <property type="molecule type" value="Genomic_DNA"/>
</dbReference>
<dbReference type="EMBL" id="AM040265">
    <property type="protein sequence ID" value="CAJ12234.1"/>
    <property type="molecule type" value="Genomic_DNA"/>
</dbReference>
<dbReference type="RefSeq" id="WP_002970474.1">
    <property type="nucleotide sequence ID" value="NZ_KN046823.1"/>
</dbReference>
<dbReference type="STRING" id="359391.BAB2_0068"/>
<dbReference type="CAZy" id="GH23">
    <property type="family name" value="Glycoside Hydrolase Family 23"/>
</dbReference>
<dbReference type="KEGG" id="bmf:BAB2_0068"/>
<dbReference type="PATRIC" id="fig|359391.11.peg.2015"/>
<dbReference type="HOGENOM" id="CLU_076837_0_0_5"/>
<dbReference type="BioCyc" id="MetaCyc:BAB_RS26685-MONOMER"/>
<dbReference type="PHI-base" id="PHI:7604"/>
<dbReference type="Proteomes" id="UP000002719">
    <property type="component" value="Chromosome II"/>
</dbReference>
<dbReference type="CDD" id="cd16892">
    <property type="entry name" value="LT_VirB1-like"/>
    <property type="match status" value="1"/>
</dbReference>
<dbReference type="Gene3D" id="1.10.530.10">
    <property type="match status" value="1"/>
</dbReference>
<dbReference type="InterPro" id="IPR023346">
    <property type="entry name" value="Lysozyme-like_dom_sf"/>
</dbReference>
<dbReference type="InterPro" id="IPR008258">
    <property type="entry name" value="Transglycosylase_SLT_dom_1"/>
</dbReference>
<dbReference type="Pfam" id="PF01464">
    <property type="entry name" value="SLT"/>
    <property type="match status" value="1"/>
</dbReference>
<dbReference type="SUPFAM" id="SSF53955">
    <property type="entry name" value="Lysozyme-like"/>
    <property type="match status" value="1"/>
</dbReference>
<organism>
    <name type="scientific">Brucella abortus (strain 2308)</name>
    <dbReference type="NCBI Taxonomy" id="359391"/>
    <lineage>
        <taxon>Bacteria</taxon>
        <taxon>Pseudomonadati</taxon>
        <taxon>Pseudomonadota</taxon>
        <taxon>Alphaproteobacteria</taxon>
        <taxon>Hyphomicrobiales</taxon>
        <taxon>Brucellaceae</taxon>
        <taxon>Brucella/Ochrobactrum group</taxon>
        <taxon>Brucella</taxon>
    </lineage>
</organism>
<sequence>MVPFLVLAQQCAPTVAPQTMAAIVQVESGFNPYAIGVVGGRLVRQPVSLDEAITTAQSLEAKGWNFSLGIAQVNRYNLPKYGSTYAQAFDPCKNLKMGSKILEDCYRRAIVKMPGQEQGALRAAFSCYYAGNFTGGFKTKPGSPSYVQKVVASADVTTKPIVVVPMIRKTPDAAAAVAAPVKKRQPADRNSVLVDLHPSSQSMPATGTANAPVRLKTEQPATTDAPPGKDNTDGVVVF</sequence>
<evidence type="ECO:0000256" key="1">
    <source>
        <dbReference type="SAM" id="MobiDB-lite"/>
    </source>
</evidence>
<evidence type="ECO:0000269" key="2">
    <source>
    </source>
</evidence>
<evidence type="ECO:0000305" key="3"/>
<accession>Q2YIT5</accession>
<accession>Q57A14</accession>
<accession>Q9KIT0</accession>
<reference key="1">
    <citation type="journal article" date="2000" name="J. Bacteriol.">
        <title>A homologue of an operon required for DNA transfer in Agrobacterium is required in Brucella abortus for virulence and intracellular multiplication.</title>
        <authorList>
            <person name="Sieira R."/>
            <person name="Comerci D.J."/>
            <person name="Sanchez D.O."/>
            <person name="Ugalde R.A."/>
        </authorList>
    </citation>
    <scope>NUCLEOTIDE SEQUENCE [GENOMIC DNA]</scope>
    <scope>TRANSCRIPTION</scope>
    <scope>FUNCTION</scope>
</reference>
<reference key="2">
    <citation type="journal article" date="2005" name="Infect. Immun.">
        <title>Whole-genome analyses of speciation events in pathogenic Brucellae.</title>
        <authorList>
            <person name="Chain P.S."/>
            <person name="Comerci D.J."/>
            <person name="Tolmasky M.E."/>
            <person name="Larimer F.W."/>
            <person name="Malfatti S.A."/>
            <person name="Vergez L.M."/>
            <person name="Aguero F."/>
            <person name="Land M.L."/>
            <person name="Ugalde R.A."/>
            <person name="Garcia E."/>
        </authorList>
    </citation>
    <scope>NUCLEOTIDE SEQUENCE [LARGE SCALE GENOMIC DNA]</scope>
    <source>
        <strain>2308</strain>
    </source>
</reference>
<comment type="function">
    <text evidence="2">The virB operon is essential for intracellular survival and is not involved in the invasion process. Constitutes a major determinant of virulence in mice.</text>
</comment>
<comment type="miscellaneous">
    <text>Transcription is turned on at the beginning of the stationary phase of vegetative growth.</text>
</comment>
<comment type="similarity">
    <text evidence="3">Belongs to the virb1 family.</text>
</comment>
<keyword id="KW-1185">Reference proteome</keyword>
<keyword id="KW-0843">Virulence</keyword>
<gene>
    <name type="primary">virB1</name>
    <name type="ordered locus">BAB2_0068</name>
</gene>
<protein>
    <recommendedName>
        <fullName>Type IV secretion system protein virB1</fullName>
    </recommendedName>
</protein>
<name>VIRB1_BRUA2</name>